<organism>
    <name type="scientific">Bordetella parapertussis (strain 12822 / ATCC BAA-587 / NCTC 13253)</name>
    <dbReference type="NCBI Taxonomy" id="257311"/>
    <lineage>
        <taxon>Bacteria</taxon>
        <taxon>Pseudomonadati</taxon>
        <taxon>Pseudomonadota</taxon>
        <taxon>Betaproteobacteria</taxon>
        <taxon>Burkholderiales</taxon>
        <taxon>Alcaligenaceae</taxon>
        <taxon>Bordetella</taxon>
    </lineage>
</organism>
<dbReference type="EC" id="2.1.2.9" evidence="1"/>
<dbReference type="EMBL" id="BX640423">
    <property type="protein sequence ID" value="CAE39985.1"/>
    <property type="status" value="ALT_INIT"/>
    <property type="molecule type" value="Genomic_DNA"/>
</dbReference>
<dbReference type="RefSeq" id="WP_010927366.1">
    <property type="nucleotide sequence ID" value="NC_002928.3"/>
</dbReference>
<dbReference type="SMR" id="Q7W1V2"/>
<dbReference type="GeneID" id="93206475"/>
<dbReference type="KEGG" id="bpa:BPP0244"/>
<dbReference type="HOGENOM" id="CLU_033347_1_2_4"/>
<dbReference type="Proteomes" id="UP000001421">
    <property type="component" value="Chromosome"/>
</dbReference>
<dbReference type="GO" id="GO:0005829">
    <property type="term" value="C:cytosol"/>
    <property type="evidence" value="ECO:0007669"/>
    <property type="project" value="TreeGrafter"/>
</dbReference>
<dbReference type="GO" id="GO:0004479">
    <property type="term" value="F:methionyl-tRNA formyltransferase activity"/>
    <property type="evidence" value="ECO:0007669"/>
    <property type="project" value="UniProtKB-UniRule"/>
</dbReference>
<dbReference type="CDD" id="cd08646">
    <property type="entry name" value="FMT_core_Met-tRNA-FMT_N"/>
    <property type="match status" value="1"/>
</dbReference>
<dbReference type="CDD" id="cd08704">
    <property type="entry name" value="Met_tRNA_FMT_C"/>
    <property type="match status" value="1"/>
</dbReference>
<dbReference type="Gene3D" id="3.10.25.10">
    <property type="entry name" value="Formyl transferase, C-terminal domain"/>
    <property type="match status" value="1"/>
</dbReference>
<dbReference type="Gene3D" id="3.40.50.170">
    <property type="entry name" value="Formyl transferase, N-terminal domain"/>
    <property type="match status" value="1"/>
</dbReference>
<dbReference type="HAMAP" id="MF_00182">
    <property type="entry name" value="Formyl_trans"/>
    <property type="match status" value="1"/>
</dbReference>
<dbReference type="InterPro" id="IPR005794">
    <property type="entry name" value="Fmt"/>
</dbReference>
<dbReference type="InterPro" id="IPR005793">
    <property type="entry name" value="Formyl_trans_C"/>
</dbReference>
<dbReference type="InterPro" id="IPR037022">
    <property type="entry name" value="Formyl_trans_C_sf"/>
</dbReference>
<dbReference type="InterPro" id="IPR002376">
    <property type="entry name" value="Formyl_transf_N"/>
</dbReference>
<dbReference type="InterPro" id="IPR036477">
    <property type="entry name" value="Formyl_transf_N_sf"/>
</dbReference>
<dbReference type="InterPro" id="IPR011034">
    <property type="entry name" value="Formyl_transferase-like_C_sf"/>
</dbReference>
<dbReference type="InterPro" id="IPR001555">
    <property type="entry name" value="GART_AS"/>
</dbReference>
<dbReference type="InterPro" id="IPR044135">
    <property type="entry name" value="Met-tRNA-FMT_C"/>
</dbReference>
<dbReference type="InterPro" id="IPR041711">
    <property type="entry name" value="Met-tRNA-FMT_N"/>
</dbReference>
<dbReference type="NCBIfam" id="TIGR00460">
    <property type="entry name" value="fmt"/>
    <property type="match status" value="1"/>
</dbReference>
<dbReference type="PANTHER" id="PTHR11138">
    <property type="entry name" value="METHIONYL-TRNA FORMYLTRANSFERASE"/>
    <property type="match status" value="1"/>
</dbReference>
<dbReference type="PANTHER" id="PTHR11138:SF5">
    <property type="entry name" value="METHIONYL-TRNA FORMYLTRANSFERASE, MITOCHONDRIAL"/>
    <property type="match status" value="1"/>
</dbReference>
<dbReference type="Pfam" id="PF02911">
    <property type="entry name" value="Formyl_trans_C"/>
    <property type="match status" value="1"/>
</dbReference>
<dbReference type="Pfam" id="PF00551">
    <property type="entry name" value="Formyl_trans_N"/>
    <property type="match status" value="1"/>
</dbReference>
<dbReference type="SUPFAM" id="SSF50486">
    <property type="entry name" value="FMT C-terminal domain-like"/>
    <property type="match status" value="1"/>
</dbReference>
<dbReference type="SUPFAM" id="SSF53328">
    <property type="entry name" value="Formyltransferase"/>
    <property type="match status" value="1"/>
</dbReference>
<dbReference type="PROSITE" id="PS00373">
    <property type="entry name" value="GART"/>
    <property type="match status" value="1"/>
</dbReference>
<evidence type="ECO:0000255" key="1">
    <source>
        <dbReference type="HAMAP-Rule" id="MF_00182"/>
    </source>
</evidence>
<evidence type="ECO:0000305" key="2"/>
<keyword id="KW-0648">Protein biosynthesis</keyword>
<keyword id="KW-0808">Transferase</keyword>
<gene>
    <name evidence="1" type="primary">fmt</name>
    <name type="ordered locus">BPP0244</name>
</gene>
<comment type="function">
    <text evidence="1">Attaches a formyl group to the free amino group of methionyl-tRNA(fMet). The formyl group appears to play a dual role in the initiator identity of N-formylmethionyl-tRNA by promoting its recognition by IF2 and preventing the misappropriation of this tRNA by the elongation apparatus.</text>
</comment>
<comment type="catalytic activity">
    <reaction evidence="1">
        <text>L-methionyl-tRNA(fMet) + (6R)-10-formyltetrahydrofolate = N-formyl-L-methionyl-tRNA(fMet) + (6S)-5,6,7,8-tetrahydrofolate + H(+)</text>
        <dbReference type="Rhea" id="RHEA:24380"/>
        <dbReference type="Rhea" id="RHEA-COMP:9952"/>
        <dbReference type="Rhea" id="RHEA-COMP:9953"/>
        <dbReference type="ChEBI" id="CHEBI:15378"/>
        <dbReference type="ChEBI" id="CHEBI:57453"/>
        <dbReference type="ChEBI" id="CHEBI:78530"/>
        <dbReference type="ChEBI" id="CHEBI:78844"/>
        <dbReference type="ChEBI" id="CHEBI:195366"/>
        <dbReference type="EC" id="2.1.2.9"/>
    </reaction>
</comment>
<comment type="similarity">
    <text evidence="1">Belongs to the Fmt family.</text>
</comment>
<comment type="sequence caution" evidence="2">
    <conflict type="erroneous initiation">
        <sequence resource="EMBL-CDS" id="CAE39985"/>
    </conflict>
</comment>
<proteinExistence type="inferred from homology"/>
<sequence>MRLVFAGTPEFARIALDALLAAGHDVPLVLTQPDRPAGRGLKLTPSPVKQAALAAGIGVAQPRSLRLDGRYPDEAAAARAQLERVAPDVMVVAAYGLILPQWTLDLPRLGCLNIHASLLPRWRGAAPIQRAIEAGDAETGVTIMQMDAGLDTGDMLLERAVPIGAQQTAAQLHDELALAGGQAIVDALAALGQGGLAPRRQPDAGVTYAAKLDKAEAALDCSLPAAVLARRVRAFNPVPGATIRLPGLDDPVKVWRAQALEQAAGGPPGAVLRADAQGIDIATGQGVLRLLELQKAGGKRQPVDVFVRGWQP</sequence>
<name>FMT_BORPA</name>
<feature type="chain" id="PRO_0000082927" description="Methionyl-tRNA formyltransferase">
    <location>
        <begin position="1"/>
        <end position="312"/>
    </location>
</feature>
<feature type="binding site" evidence="1">
    <location>
        <begin position="117"/>
        <end position="120"/>
    </location>
    <ligand>
        <name>(6S)-5,6,7,8-tetrahydrofolate</name>
        <dbReference type="ChEBI" id="CHEBI:57453"/>
    </ligand>
</feature>
<protein>
    <recommendedName>
        <fullName evidence="1">Methionyl-tRNA formyltransferase</fullName>
        <ecNumber evidence="1">2.1.2.9</ecNumber>
    </recommendedName>
</protein>
<accession>Q7W1V2</accession>
<reference key="1">
    <citation type="journal article" date="2003" name="Nat. Genet.">
        <title>Comparative analysis of the genome sequences of Bordetella pertussis, Bordetella parapertussis and Bordetella bronchiseptica.</title>
        <authorList>
            <person name="Parkhill J."/>
            <person name="Sebaihia M."/>
            <person name="Preston A."/>
            <person name="Murphy L.D."/>
            <person name="Thomson N.R."/>
            <person name="Harris D.E."/>
            <person name="Holden M.T.G."/>
            <person name="Churcher C.M."/>
            <person name="Bentley S.D."/>
            <person name="Mungall K.L."/>
            <person name="Cerdeno-Tarraga A.-M."/>
            <person name="Temple L."/>
            <person name="James K.D."/>
            <person name="Harris B."/>
            <person name="Quail M.A."/>
            <person name="Achtman M."/>
            <person name="Atkin R."/>
            <person name="Baker S."/>
            <person name="Basham D."/>
            <person name="Bason N."/>
            <person name="Cherevach I."/>
            <person name="Chillingworth T."/>
            <person name="Collins M."/>
            <person name="Cronin A."/>
            <person name="Davis P."/>
            <person name="Doggett J."/>
            <person name="Feltwell T."/>
            <person name="Goble A."/>
            <person name="Hamlin N."/>
            <person name="Hauser H."/>
            <person name="Holroyd S."/>
            <person name="Jagels K."/>
            <person name="Leather S."/>
            <person name="Moule S."/>
            <person name="Norberczak H."/>
            <person name="O'Neil S."/>
            <person name="Ormond D."/>
            <person name="Price C."/>
            <person name="Rabbinowitsch E."/>
            <person name="Rutter S."/>
            <person name="Sanders M."/>
            <person name="Saunders D."/>
            <person name="Seeger K."/>
            <person name="Sharp S."/>
            <person name="Simmonds M."/>
            <person name="Skelton J."/>
            <person name="Squares R."/>
            <person name="Squares S."/>
            <person name="Stevens K."/>
            <person name="Unwin L."/>
            <person name="Whitehead S."/>
            <person name="Barrell B.G."/>
            <person name="Maskell D.J."/>
        </authorList>
    </citation>
    <scope>NUCLEOTIDE SEQUENCE [LARGE SCALE GENOMIC DNA]</scope>
    <source>
        <strain>12822 / ATCC BAA-587 / NCTC 13253</strain>
    </source>
</reference>